<accession>A0QNL0</accession>
<evidence type="ECO:0000250" key="1">
    <source>
        <dbReference type="UniProtKB" id="P9WJE9"/>
    </source>
</evidence>
<evidence type="ECO:0000255" key="2"/>
<evidence type="ECO:0000269" key="3">
    <source>
    </source>
</evidence>
<evidence type="ECO:0000269" key="4">
    <source>
    </source>
</evidence>
<evidence type="ECO:0000303" key="5">
    <source>
    </source>
</evidence>
<evidence type="ECO:0000303" key="6">
    <source>
    </source>
</evidence>
<evidence type="ECO:0000303" key="7">
    <source>
    </source>
</evidence>
<evidence type="ECO:0000305" key="8"/>
<evidence type="ECO:0000305" key="9">
    <source>
    </source>
</evidence>
<evidence type="ECO:0000305" key="10">
    <source>
    </source>
</evidence>
<comment type="function">
    <text evidence="3 4">Part of the ESX-1 / type VII specialized secretion system (T7SS), which exports several proteins including EsxA and EsxB (PubMed:15687187). Plays a role in DNA conjugation, in at least a donor strain (PubMed:15314236).</text>
</comment>
<comment type="subunit">
    <text evidence="1 10">Part of the ESX-1 / type VII secretion system (T7SS), which is composed of cytosolic and membrane components. The ESX-1 membrane complex is composed of EccB1, EccCa1, EccCb1, EccD1 and EccE1 (By similarity).</text>
</comment>
<comment type="subcellular location">
    <subcellularLocation>
        <location evidence="2">Cell inner membrane</location>
        <topology evidence="2">Multi-pass membrane protein</topology>
    </subcellularLocation>
</comment>
<comment type="disruption phenotype">
    <text evidence="3 4">Increases efficiency of DNA conjugation when disrupted in donor strain (PubMed:15314236). Loss of secretion of EsxA and EsxB, but not their expression (PubMed:15687187).</text>
</comment>
<comment type="miscellaneous">
    <text evidence="9">DNA conjugation in M.smegmatis is unidirectional with distinct donor and recipient strains; mc(2)155 is a donor strain while MKD8 is a recipient strain. Mutations in a donor strain that alter DNA transfer do not always alter DNA transfer in a recipient strain.</text>
</comment>
<comment type="similarity">
    <text evidence="8">Belongs to the EccE family.</text>
</comment>
<name>ECCE1_MYCS2</name>
<dbReference type="EMBL" id="CP000480">
    <property type="protein sequence ID" value="ABK70621.1"/>
    <property type="molecule type" value="Genomic_DNA"/>
</dbReference>
<dbReference type="EMBL" id="CP001663">
    <property type="protein sequence ID" value="AFP36562.1"/>
    <property type="molecule type" value="Genomic_DNA"/>
</dbReference>
<dbReference type="RefSeq" id="YP_884498.1">
    <property type="nucleotide sequence ID" value="NC_008596.1"/>
</dbReference>
<dbReference type="STRING" id="246196.MSMEG_0082"/>
<dbReference type="PaxDb" id="246196-MSMEI_0080"/>
<dbReference type="KEGG" id="msb:LJ00_00415"/>
<dbReference type="KEGG" id="msg:MSMEI_0080"/>
<dbReference type="KEGG" id="msm:MSMEG_0082"/>
<dbReference type="PATRIC" id="fig|246196.19.peg.80"/>
<dbReference type="eggNOG" id="ENOG5031ZQC">
    <property type="taxonomic scope" value="Bacteria"/>
</dbReference>
<dbReference type="OrthoDB" id="4152590at2"/>
<dbReference type="Proteomes" id="UP000000757">
    <property type="component" value="Chromosome"/>
</dbReference>
<dbReference type="Proteomes" id="UP000006158">
    <property type="component" value="Chromosome"/>
</dbReference>
<dbReference type="GO" id="GO:0005886">
    <property type="term" value="C:plasma membrane"/>
    <property type="evidence" value="ECO:0007669"/>
    <property type="project" value="UniProtKB-SubCell"/>
</dbReference>
<dbReference type="InterPro" id="IPR050051">
    <property type="entry name" value="EccE_dom"/>
</dbReference>
<dbReference type="InterPro" id="IPR021368">
    <property type="entry name" value="T7SS_EccE"/>
</dbReference>
<dbReference type="NCBIfam" id="TIGR03923">
    <property type="entry name" value="T7SS_EccE"/>
    <property type="match status" value="1"/>
</dbReference>
<dbReference type="Pfam" id="PF11203">
    <property type="entry name" value="EccE"/>
    <property type="match status" value="1"/>
</dbReference>
<organism>
    <name type="scientific">Mycolicibacterium smegmatis (strain ATCC 700084 / mc(2)155)</name>
    <name type="common">Mycobacterium smegmatis</name>
    <dbReference type="NCBI Taxonomy" id="246196"/>
    <lineage>
        <taxon>Bacteria</taxon>
        <taxon>Bacillati</taxon>
        <taxon>Actinomycetota</taxon>
        <taxon>Actinomycetes</taxon>
        <taxon>Mycobacteriales</taxon>
        <taxon>Mycobacteriaceae</taxon>
        <taxon>Mycolicibacterium</taxon>
    </lineage>
</organism>
<keyword id="KW-0997">Cell inner membrane</keyword>
<keyword id="KW-1003">Cell membrane</keyword>
<keyword id="KW-0472">Membrane</keyword>
<keyword id="KW-1185">Reference proteome</keyword>
<keyword id="KW-0812">Transmembrane</keyword>
<keyword id="KW-1133">Transmembrane helix</keyword>
<keyword id="KW-0813">Transport</keyword>
<sequence length="464" mass="51023">MNFLRQFGFRFTTGHGIWAATLIPACIAICMHFDLLWLGITLGALIALFSVLTIRGLRITGWVRAIFSWRRRHRSTPDIASEPAVGSTVMPGDHVAVRWQGDYLIAVIELVPRPFTPTVIVNGSAMTDDVVNTKLVERLLEAHCPDLEADVVSAGYRVGKTAPASLIALYEQVVGPYPAPANRRTWIVLRADPEKTQRSAHRRDSGVSGLARYLVASATRIADQLASNGVDARCCRSFDDYEKATEISYERETWSSIKGRSTFTAAYTAPGGPDMWWSARADHTITRVRVRPGAAPSSAILLTTLANPTTPRGFSCLFGGQRAALQGIVPVSDKHYDLPIGSAGVLVGETADRYPVYMPFDNVDVSINLGDARLFTQFVIRSAAAGAVVTLGPQFREFATMINGRVGRTPRIGWPNATTYLGPHQGVGRVILRPNFIDTPRHRQLPIQLINPREESRYQMALEQ</sequence>
<proteinExistence type="inferred from homology"/>
<feature type="chain" id="PRO_0000438350" description="ESX-1 secretion system protein EccE1">
    <location>
        <begin position="1"/>
        <end position="464"/>
    </location>
</feature>
<feature type="transmembrane region" description="Helical" evidence="2">
    <location>
        <begin position="11"/>
        <end position="31"/>
    </location>
</feature>
<feature type="transmembrane region" description="Helical" evidence="2">
    <location>
        <begin position="34"/>
        <end position="54"/>
    </location>
</feature>
<reference key="1">
    <citation type="submission" date="2006-10" db="EMBL/GenBank/DDBJ databases">
        <authorList>
            <person name="Fleischmann R.D."/>
            <person name="Dodson R.J."/>
            <person name="Haft D.H."/>
            <person name="Merkel J.S."/>
            <person name="Nelson W.C."/>
            <person name="Fraser C.M."/>
        </authorList>
    </citation>
    <scope>NUCLEOTIDE SEQUENCE [LARGE SCALE GENOMIC DNA]</scope>
    <source>
        <strain>ATCC 700084 / mc(2)155</strain>
    </source>
</reference>
<reference key="2">
    <citation type="journal article" date="2007" name="Genome Biol.">
        <title>Interrupted coding sequences in Mycobacterium smegmatis: authentic mutations or sequencing errors?</title>
        <authorList>
            <person name="Deshayes C."/>
            <person name="Perrodou E."/>
            <person name="Gallien S."/>
            <person name="Euphrasie D."/>
            <person name="Schaeffer C."/>
            <person name="Van-Dorsselaer A."/>
            <person name="Poch O."/>
            <person name="Lecompte O."/>
            <person name="Reyrat J.-M."/>
        </authorList>
    </citation>
    <scope>NUCLEOTIDE SEQUENCE [LARGE SCALE GENOMIC DNA]</scope>
    <source>
        <strain>ATCC 700084 / mc(2)155</strain>
    </source>
</reference>
<reference key="3">
    <citation type="journal article" date="2009" name="Genome Res.">
        <title>Ortho-proteogenomics: multiple proteomes investigation through orthology and a new MS-based protocol.</title>
        <authorList>
            <person name="Gallien S."/>
            <person name="Perrodou E."/>
            <person name="Carapito C."/>
            <person name="Deshayes C."/>
            <person name="Reyrat J.-M."/>
            <person name="Van Dorsselaer A."/>
            <person name="Poch O."/>
            <person name="Schaeffer C."/>
            <person name="Lecompte O."/>
        </authorList>
    </citation>
    <scope>NUCLEOTIDE SEQUENCE [LARGE SCALE GENOMIC DNA]</scope>
    <source>
        <strain>ATCC 700084 / mc(2)155</strain>
    </source>
</reference>
<reference key="4">
    <citation type="journal article" date="2004" name="Proc. Natl. Acad. Sci. U.S.A.">
        <title>The RD1 virulence locus of Mycobacterium tuberculosis regulates DNA transfer in Mycobacterium smegmatis.</title>
        <authorList>
            <person name="Flint J.L."/>
            <person name="Kowalski J.C."/>
            <person name="Karnati P.K."/>
            <person name="Derbyshire K.M."/>
        </authorList>
    </citation>
    <scope>FUNCTION</scope>
    <scope>DISRUPTION PHENOTYPE</scope>
    <source>
        <strain>ATCC 700084 / mc(2)155</strain>
    </source>
</reference>
<reference key="5">
    <citation type="journal article" date="2005" name="J. Bacteriol.">
        <title>A protein secretion pathway critical for Mycobacterium tuberculosis virulence is conserved and functional in Mycobacterium smegmatis.</title>
        <authorList>
            <person name="Converse S.E."/>
            <person name="Cox J.S."/>
        </authorList>
    </citation>
    <scope>FUNCTION</scope>
    <scope>DISRUPTION PHENOTYPE</scope>
    <source>
        <strain>ATCC 700084 / mc(2)155</strain>
    </source>
</reference>
<reference key="6">
    <citation type="journal article" date="2009" name="PLoS Pathog.">
        <title>Systematic genetic nomenclature for type VII secretion systems.</title>
        <authorList>
            <person name="Bitter W."/>
            <person name="Houben E.N."/>
            <person name="Bottai D."/>
            <person name="Brodin P."/>
            <person name="Brown E.J."/>
            <person name="Cox J.S."/>
            <person name="Derbyshire K."/>
            <person name="Fortune S.M."/>
            <person name="Gao L.Y."/>
            <person name="Liu J."/>
            <person name="Gey van Pittius N.C."/>
            <person name="Pym A.S."/>
            <person name="Rubin E.J."/>
            <person name="Sherman D.R."/>
            <person name="Cole S.T."/>
            <person name="Brosch R."/>
        </authorList>
    </citation>
    <scope>NOMENCLATURE</scope>
</reference>
<protein>
    <recommendedName>
        <fullName>ESX-1 secretion system protein EccE1</fullName>
    </recommendedName>
</protein>
<gene>
    <name evidence="7" type="primary">eccE1</name>
    <name evidence="5" type="synonym">Ms3382c</name>
    <name evidence="6" type="synonym">Sm3882c</name>
    <name evidence="6" type="synonym">snm7</name>
    <name type="ordered locus">MSMEG_0082</name>
    <name type="ordered locus">MSMEI_0080</name>
</gene>